<accession>Q8W4B2</accession>
<accession>Q9LPP1</accession>
<organism evidence="10">
    <name type="scientific">Arabidopsis thaliana</name>
    <name type="common">Mouse-ear cress</name>
    <dbReference type="NCBI Taxonomy" id="3702"/>
    <lineage>
        <taxon>Eukaryota</taxon>
        <taxon>Viridiplantae</taxon>
        <taxon>Streptophyta</taxon>
        <taxon>Embryophyta</taxon>
        <taxon>Tracheophyta</taxon>
        <taxon>Spermatophyta</taxon>
        <taxon>Magnoliopsida</taxon>
        <taxon>eudicotyledons</taxon>
        <taxon>Gunneridae</taxon>
        <taxon>Pentapetalae</taxon>
        <taxon>rosids</taxon>
        <taxon>malvids</taxon>
        <taxon>Brassicales</taxon>
        <taxon>Brassicaceae</taxon>
        <taxon>Camelineae</taxon>
        <taxon>Arabidopsis</taxon>
    </lineage>
</organism>
<evidence type="ECO:0000255" key="1"/>
<evidence type="ECO:0000269" key="2">
    <source>
    </source>
</evidence>
<evidence type="ECO:0000269" key="3">
    <source>
    </source>
</evidence>
<evidence type="ECO:0000303" key="4">
    <source>
    </source>
</evidence>
<evidence type="ECO:0000303" key="5">
    <source>
    </source>
</evidence>
<evidence type="ECO:0000305" key="6"/>
<evidence type="ECO:0000305" key="7">
    <source>
    </source>
</evidence>
<evidence type="ECO:0000312" key="8">
    <source>
        <dbReference type="Araport" id="AT3G10572"/>
    </source>
</evidence>
<evidence type="ECO:0000312" key="9">
    <source>
        <dbReference type="EMBL" id="AAF76360.1"/>
    </source>
</evidence>
<evidence type="ECO:0000312" key="10">
    <source>
        <dbReference type="EMBL" id="AAL32762.1"/>
    </source>
</evidence>
<keyword id="KW-0472">Membrane</keyword>
<keyword id="KW-0576">Peroxisome</keyword>
<keyword id="KW-1185">Reference proteome</keyword>
<keyword id="KW-0812">Transmembrane</keyword>
<keyword id="KW-1133">Transmembrane helix</keyword>
<sequence length="333" mass="37467">MEATDIWGEIERSESYLVCSMYEEAESLSSSILKRIFGNIDVLSDEASQGDHQFHDMLESAGMVLVQSLHGIGRTVEIVNELRDVFGEVAAIPVQVLLTGVCLQISNGSYLGVRDILEEFFRIWVYKDNHYILNDAGVSTKGFHAKNCLDIDEYMEVVELYTFGVLAKFSNDMGLAISWVEKAALPEERRQGILRRLHSLLSLKTASSFEENSKDSSYAVVNNKKSLGNEKNDEIDSFLKLSKQHEPWSLWSSHPLSLKVGNTQFSMSRGKVAVSLVGLIICYALKRKRAALIRIIRRQMESTRKAIVDFWKLAFSYQVNPLAAIQSIPSTTT</sequence>
<dbReference type="EMBL" id="AC013428">
    <property type="protein sequence ID" value="AAF76360.1"/>
    <property type="status" value="ALT_SEQ"/>
    <property type="molecule type" value="Genomic_DNA"/>
</dbReference>
<dbReference type="EMBL" id="CP002686">
    <property type="protein sequence ID" value="AEE74927.1"/>
    <property type="molecule type" value="Genomic_DNA"/>
</dbReference>
<dbReference type="EMBL" id="AY062684">
    <property type="protein sequence ID" value="AAL32762.1"/>
    <property type="molecule type" value="mRNA"/>
</dbReference>
<dbReference type="EMBL" id="AY093365">
    <property type="protein sequence ID" value="AAM13364.1"/>
    <property type="molecule type" value="mRNA"/>
</dbReference>
<dbReference type="RefSeq" id="NP_850555.1">
    <property type="nucleotide sequence ID" value="NM_180224.4"/>
</dbReference>
<dbReference type="SMR" id="Q8W4B2"/>
<dbReference type="FunCoup" id="Q8W4B2">
    <property type="interactions" value="1544"/>
</dbReference>
<dbReference type="IntAct" id="Q8W4B2">
    <property type="interactions" value="1"/>
</dbReference>
<dbReference type="STRING" id="3702.Q8W4B2"/>
<dbReference type="PaxDb" id="3702-AT3G10572.1"/>
<dbReference type="ProteomicsDB" id="244965"/>
<dbReference type="EnsemblPlants" id="AT3G10572.1">
    <property type="protein sequence ID" value="AT3G10572.1"/>
    <property type="gene ID" value="AT3G10572"/>
</dbReference>
<dbReference type="GeneID" id="820223"/>
<dbReference type="Gramene" id="AT3G10572.1">
    <property type="protein sequence ID" value="AT3G10572.1"/>
    <property type="gene ID" value="AT3G10572"/>
</dbReference>
<dbReference type="KEGG" id="ath:AT3G10572"/>
<dbReference type="Araport" id="AT3G10572"/>
<dbReference type="TAIR" id="AT3G10572">
    <property type="gene designation" value="APEM9"/>
</dbReference>
<dbReference type="eggNOG" id="ENOG502QV2J">
    <property type="taxonomic scope" value="Eukaryota"/>
</dbReference>
<dbReference type="HOGENOM" id="CLU_044007_0_0_1"/>
<dbReference type="InParanoid" id="Q8W4B2"/>
<dbReference type="OMA" id="FGNTRFS"/>
<dbReference type="PhylomeDB" id="Q8W4B2"/>
<dbReference type="PRO" id="PR:Q8W4B2"/>
<dbReference type="Proteomes" id="UP000006548">
    <property type="component" value="Chromosome 3"/>
</dbReference>
<dbReference type="ExpressionAtlas" id="Q8W4B2">
    <property type="expression patterns" value="baseline and differential"/>
</dbReference>
<dbReference type="GO" id="GO:0005730">
    <property type="term" value="C:nucleolus"/>
    <property type="evidence" value="ECO:0007005"/>
    <property type="project" value="TAIR"/>
</dbReference>
<dbReference type="GO" id="GO:0005778">
    <property type="term" value="C:peroxisomal membrane"/>
    <property type="evidence" value="ECO:0007669"/>
    <property type="project" value="UniProtKB-SubCell"/>
</dbReference>
<dbReference type="GO" id="GO:0005777">
    <property type="term" value="C:peroxisome"/>
    <property type="evidence" value="ECO:0000314"/>
    <property type="project" value="TAIR"/>
</dbReference>
<dbReference type="GO" id="GO:0015919">
    <property type="term" value="P:peroxisomal membrane transport"/>
    <property type="evidence" value="ECO:0007669"/>
    <property type="project" value="InterPro"/>
</dbReference>
<dbReference type="GO" id="GO:0043574">
    <property type="term" value="P:peroxisomal transport"/>
    <property type="evidence" value="ECO:0000315"/>
    <property type="project" value="TAIR"/>
</dbReference>
<dbReference type="InterPro" id="IPR034571">
    <property type="entry name" value="APEM9"/>
</dbReference>
<dbReference type="PANTHER" id="PTHR36361">
    <property type="entry name" value="PROTEIN APEM9"/>
    <property type="match status" value="1"/>
</dbReference>
<dbReference type="PANTHER" id="PTHR36361:SF1">
    <property type="entry name" value="PROTEIN APEM9"/>
    <property type="match status" value="1"/>
</dbReference>
<name>APEM9_ARATH</name>
<gene>
    <name evidence="4" type="primary">APEM9</name>
    <name evidence="5" type="synonym">DAU</name>
    <name evidence="8" type="ordered locus">At3g10572</name>
    <name evidence="9" type="ORF">F18K10.16</name>
</gene>
<proteinExistence type="evidence at protein level"/>
<feature type="chain" id="PRO_0000438625" description="Protein APEM9">
    <location>
        <begin position="1"/>
        <end position="333"/>
    </location>
</feature>
<feature type="topological domain" description="Cytoplasmic" evidence="7">
    <location>
        <begin position="1"/>
        <end position="90"/>
    </location>
</feature>
<feature type="transmembrane region" description="Helical" evidence="7">
    <location>
        <begin position="91"/>
        <end position="102"/>
    </location>
</feature>
<feature type="topological domain" description="Peroxisomal" evidence="7">
    <location>
        <begin position="103"/>
        <end position="268"/>
    </location>
</feature>
<feature type="transmembrane region" description="Helical" evidence="1 7">
    <location>
        <begin position="269"/>
        <end position="285"/>
    </location>
</feature>
<feature type="topological domain" description="Cytoplasmic" evidence="7">
    <location>
        <begin position="286"/>
        <end position="333"/>
    </location>
</feature>
<feature type="mutagenesis site" description="In apem9-1; loss of peroxisomal localization, but no effect on the interaction with PEX6." evidence="2">
    <original>G</original>
    <variation>E</variation>
    <location>
        <position position="278"/>
    </location>
</feature>
<protein>
    <recommendedName>
        <fullName evidence="4">Protein APEM9</fullName>
    </recommendedName>
    <alternativeName>
        <fullName evidence="4">ABERRANT PEROXISOME MORPHOLOGY 9</fullName>
    </alternativeName>
    <alternativeName>
        <fullName evidence="5">Protein DAYU</fullName>
    </alternativeName>
</protein>
<reference key="1">
    <citation type="journal article" date="2000" name="Nature">
        <title>Sequence and analysis of chromosome 3 of the plant Arabidopsis thaliana.</title>
        <authorList>
            <person name="Salanoubat M."/>
            <person name="Lemcke K."/>
            <person name="Rieger M."/>
            <person name="Ansorge W."/>
            <person name="Unseld M."/>
            <person name="Fartmann B."/>
            <person name="Valle G."/>
            <person name="Bloecker H."/>
            <person name="Perez-Alonso M."/>
            <person name="Obermaier B."/>
            <person name="Delseny M."/>
            <person name="Boutry M."/>
            <person name="Grivell L.A."/>
            <person name="Mache R."/>
            <person name="Puigdomenech P."/>
            <person name="De Simone V."/>
            <person name="Choisne N."/>
            <person name="Artiguenave F."/>
            <person name="Robert C."/>
            <person name="Brottier P."/>
            <person name="Wincker P."/>
            <person name="Cattolico L."/>
            <person name="Weissenbach J."/>
            <person name="Saurin W."/>
            <person name="Quetier F."/>
            <person name="Schaefer M."/>
            <person name="Mueller-Auer S."/>
            <person name="Gabel C."/>
            <person name="Fuchs M."/>
            <person name="Benes V."/>
            <person name="Wurmbach E."/>
            <person name="Drzonek H."/>
            <person name="Erfle H."/>
            <person name="Jordan N."/>
            <person name="Bangert S."/>
            <person name="Wiedelmann R."/>
            <person name="Kranz H."/>
            <person name="Voss H."/>
            <person name="Holland R."/>
            <person name="Brandt P."/>
            <person name="Nyakatura G."/>
            <person name="Vezzi A."/>
            <person name="D'Angelo M."/>
            <person name="Pallavicini A."/>
            <person name="Toppo S."/>
            <person name="Simionati B."/>
            <person name="Conrad A."/>
            <person name="Hornischer K."/>
            <person name="Kauer G."/>
            <person name="Loehnert T.-H."/>
            <person name="Nordsiek G."/>
            <person name="Reichelt J."/>
            <person name="Scharfe M."/>
            <person name="Schoen O."/>
            <person name="Bargues M."/>
            <person name="Terol J."/>
            <person name="Climent J."/>
            <person name="Navarro P."/>
            <person name="Collado C."/>
            <person name="Perez-Perez A."/>
            <person name="Ottenwaelder B."/>
            <person name="Duchemin D."/>
            <person name="Cooke R."/>
            <person name="Laudie M."/>
            <person name="Berger-Llauro C."/>
            <person name="Purnelle B."/>
            <person name="Masuy D."/>
            <person name="de Haan M."/>
            <person name="Maarse A.C."/>
            <person name="Alcaraz J.-P."/>
            <person name="Cottet A."/>
            <person name="Casacuberta E."/>
            <person name="Monfort A."/>
            <person name="Argiriou A."/>
            <person name="Flores M."/>
            <person name="Liguori R."/>
            <person name="Vitale D."/>
            <person name="Mannhaupt G."/>
            <person name="Haase D."/>
            <person name="Schoof H."/>
            <person name="Rudd S."/>
            <person name="Zaccaria P."/>
            <person name="Mewes H.-W."/>
            <person name="Mayer K.F.X."/>
            <person name="Kaul S."/>
            <person name="Town C.D."/>
            <person name="Koo H.L."/>
            <person name="Tallon L.J."/>
            <person name="Jenkins J."/>
            <person name="Rooney T."/>
            <person name="Rizzo M."/>
            <person name="Walts A."/>
            <person name="Utterback T."/>
            <person name="Fujii C.Y."/>
            <person name="Shea T.P."/>
            <person name="Creasy T.H."/>
            <person name="Haas B."/>
            <person name="Maiti R."/>
            <person name="Wu D."/>
            <person name="Peterson J."/>
            <person name="Van Aken S."/>
            <person name="Pai G."/>
            <person name="Militscher J."/>
            <person name="Sellers P."/>
            <person name="Gill J.E."/>
            <person name="Feldblyum T.V."/>
            <person name="Preuss D."/>
            <person name="Lin X."/>
            <person name="Nierman W.C."/>
            <person name="Salzberg S.L."/>
            <person name="White O."/>
            <person name="Venter J.C."/>
            <person name="Fraser C.M."/>
            <person name="Kaneko T."/>
            <person name="Nakamura Y."/>
            <person name="Sato S."/>
            <person name="Kato T."/>
            <person name="Asamizu E."/>
            <person name="Sasamoto S."/>
            <person name="Kimura T."/>
            <person name="Idesawa K."/>
            <person name="Kawashima K."/>
            <person name="Kishida Y."/>
            <person name="Kiyokawa C."/>
            <person name="Kohara M."/>
            <person name="Matsumoto M."/>
            <person name="Matsuno A."/>
            <person name="Muraki A."/>
            <person name="Nakayama S."/>
            <person name="Nakazaki N."/>
            <person name="Shinpo S."/>
            <person name="Takeuchi C."/>
            <person name="Wada T."/>
            <person name="Watanabe A."/>
            <person name="Yamada M."/>
            <person name="Yasuda M."/>
            <person name="Tabata S."/>
        </authorList>
    </citation>
    <scope>NUCLEOTIDE SEQUENCE [LARGE SCALE GENOMIC DNA]</scope>
    <source>
        <strain>cv. Columbia</strain>
    </source>
</reference>
<reference key="2">
    <citation type="journal article" date="2017" name="Plant J.">
        <title>Araport11: a complete reannotation of the Arabidopsis thaliana reference genome.</title>
        <authorList>
            <person name="Cheng C.Y."/>
            <person name="Krishnakumar V."/>
            <person name="Chan A.P."/>
            <person name="Thibaud-Nissen F."/>
            <person name="Schobel S."/>
            <person name="Town C.D."/>
        </authorList>
    </citation>
    <scope>GENOME REANNOTATION</scope>
    <source>
        <strain>cv. Columbia</strain>
    </source>
</reference>
<reference key="3">
    <citation type="journal article" date="2003" name="Science">
        <title>Empirical analysis of transcriptional activity in the Arabidopsis genome.</title>
        <authorList>
            <person name="Yamada K."/>
            <person name="Lim J."/>
            <person name="Dale J.M."/>
            <person name="Chen H."/>
            <person name="Shinn P."/>
            <person name="Palm C.J."/>
            <person name="Southwick A.M."/>
            <person name="Wu H.C."/>
            <person name="Kim C.J."/>
            <person name="Nguyen M."/>
            <person name="Pham P.K."/>
            <person name="Cheuk R.F."/>
            <person name="Karlin-Newmann G."/>
            <person name="Liu S.X."/>
            <person name="Lam B."/>
            <person name="Sakano H."/>
            <person name="Wu T."/>
            <person name="Yu G."/>
            <person name="Miranda M."/>
            <person name="Quach H.L."/>
            <person name="Tripp M."/>
            <person name="Chang C.H."/>
            <person name="Lee J.M."/>
            <person name="Toriumi M.J."/>
            <person name="Chan M.M."/>
            <person name="Tang C.C."/>
            <person name="Onodera C.S."/>
            <person name="Deng J.M."/>
            <person name="Akiyama K."/>
            <person name="Ansari Y."/>
            <person name="Arakawa T."/>
            <person name="Banh J."/>
            <person name="Banno F."/>
            <person name="Bowser L."/>
            <person name="Brooks S.Y."/>
            <person name="Carninci P."/>
            <person name="Chao Q."/>
            <person name="Choy N."/>
            <person name="Enju A."/>
            <person name="Goldsmith A.D."/>
            <person name="Gurjal M."/>
            <person name="Hansen N.F."/>
            <person name="Hayashizaki Y."/>
            <person name="Johnson-Hopson C."/>
            <person name="Hsuan V.W."/>
            <person name="Iida K."/>
            <person name="Karnes M."/>
            <person name="Khan S."/>
            <person name="Koesema E."/>
            <person name="Ishida J."/>
            <person name="Jiang P.X."/>
            <person name="Jones T."/>
            <person name="Kawai J."/>
            <person name="Kamiya A."/>
            <person name="Meyers C."/>
            <person name="Nakajima M."/>
            <person name="Narusaka M."/>
            <person name="Seki M."/>
            <person name="Sakurai T."/>
            <person name="Satou M."/>
            <person name="Tamse R."/>
            <person name="Vaysberg M."/>
            <person name="Wallender E.K."/>
            <person name="Wong C."/>
            <person name="Yamamura Y."/>
            <person name="Yuan S."/>
            <person name="Shinozaki K."/>
            <person name="Davis R.W."/>
            <person name="Theologis A."/>
            <person name="Ecker J.R."/>
        </authorList>
    </citation>
    <scope>NUCLEOTIDE SEQUENCE [LARGE SCALE MRNA]</scope>
    <source>
        <strain>cv. Columbia</strain>
    </source>
</reference>
<reference key="4">
    <citation type="journal article" date="2011" name="Plant Cell">
        <title>Arabidopsis ABERRANT PEROXISOME MORPHOLOGY9 is a peroxin that recruits the PEX1-PEX6 complex to peroxisomes.</title>
        <authorList>
            <person name="Goto S."/>
            <person name="Mano S."/>
            <person name="Nakamori C."/>
            <person name="Nishimura M."/>
        </authorList>
    </citation>
    <scope>FUNCTION</scope>
    <scope>MUTAGENESIS OF GLY-278</scope>
    <scope>SUBCELLULAR LOCATION</scope>
    <scope>INTERACTION WITH PEX6 AND PEX19-1</scope>
    <scope>LACK OF INTERACTION WITH PEX1</scope>
    <scope>TISSUE SPECIFICITY</scope>
    <scope>DISRUPTION PHENOTYPE</scope>
</reference>
<reference key="5">
    <citation type="journal article" date="2014" name="Plant Cell">
        <title>Arabidopsis DAYU/ABERRANT PEROXISOME MORPHOLOGY9 is a key regulator of peroxisome biogenesis and plays critical roles during pollen maturation and germination in planta.</title>
        <authorList>
            <person name="Li X.R."/>
            <person name="Li H.J."/>
            <person name="Yuan L."/>
            <person name="Liu M."/>
            <person name="Shi D.Q."/>
            <person name="Liu J."/>
            <person name="Yang W.C."/>
        </authorList>
    </citation>
    <scope>FUNCTION</scope>
    <scope>DISRUPTION PHENOTYPE</scope>
    <scope>TOPOLOGY</scope>
    <scope>DEVELOPMENTAL STAGE</scope>
    <scope>INTERACTION WITH PEX13 AND PEX16</scope>
</reference>
<comment type="function">
    <text evidence="2 3">Involved in peroxisome biogenesis and matrix protein import (PubMed:24510720). Required for pollen maturation and in vivo germination via its role in peroxisomal function, which partially involves jasmonic acid biosynthesis (PubMed:24510720). Transported to peroxisomes via the interaction with PEX19-1 (PubMed:21487094). Required for peroxisomal protein import by acting as an anchoring protein for the AAA ATPase complex, which consists of PEX1 and PEX6 (PubMed:21487094).</text>
</comment>
<comment type="subunit">
    <text evidence="2 3">Interacts with PEX6 and PEX19-1, but not with PEX1 (PubMed:21487094). Interacts (via N-terminus) with PEX13, and (via N-terminus and C-terminus) with PEX16 (PubMed:24510720).</text>
</comment>
<comment type="subcellular location">
    <subcellularLocation>
        <location evidence="2">Peroxisome membrane</location>
        <topology evidence="1">Multi-pass membrane protein</topology>
    </subcellularLocation>
</comment>
<comment type="tissue specificity">
    <text evidence="2">Expressed in roots, leaves, stems, flowers, buds and fruits.</text>
</comment>
<comment type="developmental stage">
    <text evidence="3">Not detected in microspores before and at stage of pollen mitosis I. Expressed in bicellular, tricellular and mature pollen grains.</text>
</comment>
<comment type="disruption phenotype">
    <text evidence="2 3">Embryo lethality, when homozygous.</text>
</comment>
<comment type="sequence caution" evidence="6">
    <conflict type="erroneous gene model prediction">
        <sequence resource="EMBL-CDS" id="AAF76360"/>
    </conflict>
</comment>